<dbReference type="EC" id="3.5.4.13" evidence="1"/>
<dbReference type="EMBL" id="AE015925">
    <property type="protein sequence ID" value="AAP05150.1"/>
    <property type="molecule type" value="Genomic_DNA"/>
</dbReference>
<dbReference type="RefSeq" id="WP_011006366.1">
    <property type="nucleotide sequence ID" value="NC_003361.3"/>
</dbReference>
<dbReference type="SMR" id="Q823K6"/>
<dbReference type="STRING" id="227941.CCA_00404"/>
<dbReference type="KEGG" id="cca:CCA_00404"/>
<dbReference type="eggNOG" id="COG0717">
    <property type="taxonomic scope" value="Bacteria"/>
</dbReference>
<dbReference type="HOGENOM" id="CLU_087476_4_0_0"/>
<dbReference type="OrthoDB" id="9780202at2"/>
<dbReference type="UniPathway" id="UPA00610">
    <property type="reaction ID" value="UER00665"/>
</dbReference>
<dbReference type="Proteomes" id="UP000002193">
    <property type="component" value="Chromosome"/>
</dbReference>
<dbReference type="GO" id="GO:0008829">
    <property type="term" value="F:dCTP deaminase activity"/>
    <property type="evidence" value="ECO:0007669"/>
    <property type="project" value="UniProtKB-UniRule"/>
</dbReference>
<dbReference type="GO" id="GO:0000166">
    <property type="term" value="F:nucleotide binding"/>
    <property type="evidence" value="ECO:0007669"/>
    <property type="project" value="UniProtKB-KW"/>
</dbReference>
<dbReference type="GO" id="GO:0006226">
    <property type="term" value="P:dUMP biosynthetic process"/>
    <property type="evidence" value="ECO:0007669"/>
    <property type="project" value="UniProtKB-UniPathway"/>
</dbReference>
<dbReference type="GO" id="GO:0006229">
    <property type="term" value="P:dUTP biosynthetic process"/>
    <property type="evidence" value="ECO:0007669"/>
    <property type="project" value="UniProtKB-UniRule"/>
</dbReference>
<dbReference type="GO" id="GO:0015949">
    <property type="term" value="P:nucleobase-containing small molecule interconversion"/>
    <property type="evidence" value="ECO:0007669"/>
    <property type="project" value="TreeGrafter"/>
</dbReference>
<dbReference type="CDD" id="cd07557">
    <property type="entry name" value="trimeric_dUTPase"/>
    <property type="match status" value="1"/>
</dbReference>
<dbReference type="FunFam" id="2.70.40.10:FF:000001">
    <property type="entry name" value="dCTP deaminase"/>
    <property type="match status" value="1"/>
</dbReference>
<dbReference type="Gene3D" id="2.70.40.10">
    <property type="match status" value="1"/>
</dbReference>
<dbReference type="HAMAP" id="MF_00146">
    <property type="entry name" value="dCTP_deaminase"/>
    <property type="match status" value="1"/>
</dbReference>
<dbReference type="InterPro" id="IPR011962">
    <property type="entry name" value="dCTP_deaminase"/>
</dbReference>
<dbReference type="InterPro" id="IPR036157">
    <property type="entry name" value="dUTPase-like_sf"/>
</dbReference>
<dbReference type="InterPro" id="IPR033704">
    <property type="entry name" value="dUTPase_trimeric"/>
</dbReference>
<dbReference type="NCBIfam" id="TIGR02274">
    <property type="entry name" value="dCTP_deam"/>
    <property type="match status" value="1"/>
</dbReference>
<dbReference type="PANTHER" id="PTHR42680">
    <property type="entry name" value="DCTP DEAMINASE"/>
    <property type="match status" value="1"/>
</dbReference>
<dbReference type="PANTHER" id="PTHR42680:SF3">
    <property type="entry name" value="DCTP DEAMINASE"/>
    <property type="match status" value="1"/>
</dbReference>
<dbReference type="Pfam" id="PF22769">
    <property type="entry name" value="DCD"/>
    <property type="match status" value="1"/>
</dbReference>
<dbReference type="SUPFAM" id="SSF51283">
    <property type="entry name" value="dUTPase-like"/>
    <property type="match status" value="1"/>
</dbReference>
<reference key="1">
    <citation type="journal article" date="2003" name="Nucleic Acids Res.">
        <title>Genome sequence of Chlamydophila caviae (Chlamydia psittaci GPIC): examining the role of niche-specific genes in the evolution of the Chlamydiaceae.</title>
        <authorList>
            <person name="Read T.D."/>
            <person name="Myers G.S.A."/>
            <person name="Brunham R.C."/>
            <person name="Nelson W.C."/>
            <person name="Paulsen I.T."/>
            <person name="Heidelberg J.F."/>
            <person name="Holtzapple E.K."/>
            <person name="Khouri H.M."/>
            <person name="Federova N.B."/>
            <person name="Carty H.A."/>
            <person name="Umayam L.A."/>
            <person name="Haft D.H."/>
            <person name="Peterson J.D."/>
            <person name="Beanan M.J."/>
            <person name="White O."/>
            <person name="Salzberg S.L."/>
            <person name="Hsia R.-C."/>
            <person name="McClarty G."/>
            <person name="Rank R.G."/>
            <person name="Bavoil P.M."/>
            <person name="Fraser C.M."/>
        </authorList>
    </citation>
    <scope>NUCLEOTIDE SEQUENCE [LARGE SCALE GENOMIC DNA]</scope>
    <source>
        <strain>ATCC VR-813 / DSM 19441 / 03DC25 / GPIC</strain>
    </source>
</reference>
<keyword id="KW-0378">Hydrolase</keyword>
<keyword id="KW-0546">Nucleotide metabolism</keyword>
<keyword id="KW-0547">Nucleotide-binding</keyword>
<sequence>MSIKEDKWIRKMALAHGMIEPFADGQVNVDAETGEKLISYGLSSYGYDLRLSREFKVFTNVYNSLVDPKHFTEDTFISITDDVCIIPPNSFALAHSVEYFRIPRNILTMCIGKSTYARCGLIVNVTPFEPEWEGYVTIEISNTTPLPAKIYANEGIAQVLFFEADEMCEVSYAERKGKYQKQQGITVPFV</sequence>
<proteinExistence type="inferred from homology"/>
<organism>
    <name type="scientific">Chlamydia caviae (strain ATCC VR-813 / DSM 19441 / 03DC25 / GPIC)</name>
    <name type="common">Chlamydophila caviae</name>
    <dbReference type="NCBI Taxonomy" id="227941"/>
    <lineage>
        <taxon>Bacteria</taxon>
        <taxon>Pseudomonadati</taxon>
        <taxon>Chlamydiota</taxon>
        <taxon>Chlamydiia</taxon>
        <taxon>Chlamydiales</taxon>
        <taxon>Chlamydiaceae</taxon>
        <taxon>Chlamydia/Chlamydophila group</taxon>
        <taxon>Chlamydia</taxon>
    </lineage>
</organism>
<evidence type="ECO:0000255" key="1">
    <source>
        <dbReference type="HAMAP-Rule" id="MF_00146"/>
    </source>
</evidence>
<accession>Q823K6</accession>
<gene>
    <name evidence="1" type="primary">dcd</name>
    <name type="ordered locus">CCA_00404</name>
</gene>
<feature type="chain" id="PRO_0000155974" description="dCTP deaminase">
    <location>
        <begin position="1"/>
        <end position="190"/>
    </location>
</feature>
<feature type="active site" description="Proton donor/acceptor" evidence="1">
    <location>
        <position position="139"/>
    </location>
</feature>
<feature type="binding site" evidence="1">
    <location>
        <begin position="113"/>
        <end position="118"/>
    </location>
    <ligand>
        <name>dCTP</name>
        <dbReference type="ChEBI" id="CHEBI:61481"/>
    </ligand>
</feature>
<feature type="binding site" evidence="1">
    <location>
        <position position="158"/>
    </location>
    <ligand>
        <name>dCTP</name>
        <dbReference type="ChEBI" id="CHEBI:61481"/>
    </ligand>
</feature>
<feature type="binding site" evidence="1">
    <location>
        <position position="172"/>
    </location>
    <ligand>
        <name>dCTP</name>
        <dbReference type="ChEBI" id="CHEBI:61481"/>
    </ligand>
</feature>
<feature type="binding site" evidence="1">
    <location>
        <position position="181"/>
    </location>
    <ligand>
        <name>dCTP</name>
        <dbReference type="ChEBI" id="CHEBI:61481"/>
    </ligand>
</feature>
<feature type="binding site" evidence="1">
    <location>
        <position position="182"/>
    </location>
    <ligand>
        <name>dCTP</name>
        <dbReference type="ChEBI" id="CHEBI:61481"/>
    </ligand>
</feature>
<protein>
    <recommendedName>
        <fullName evidence="1">dCTP deaminase</fullName>
        <ecNumber evidence="1">3.5.4.13</ecNumber>
    </recommendedName>
    <alternativeName>
        <fullName evidence="1">Deoxycytidine triphosphate deaminase</fullName>
    </alternativeName>
</protein>
<name>DCD_CHLCV</name>
<comment type="function">
    <text evidence="1">Catalyzes the deamination of dCTP to dUTP.</text>
</comment>
<comment type="catalytic activity">
    <reaction evidence="1">
        <text>dCTP + H2O + H(+) = dUTP + NH4(+)</text>
        <dbReference type="Rhea" id="RHEA:22680"/>
        <dbReference type="ChEBI" id="CHEBI:15377"/>
        <dbReference type="ChEBI" id="CHEBI:15378"/>
        <dbReference type="ChEBI" id="CHEBI:28938"/>
        <dbReference type="ChEBI" id="CHEBI:61481"/>
        <dbReference type="ChEBI" id="CHEBI:61555"/>
        <dbReference type="EC" id="3.5.4.13"/>
    </reaction>
</comment>
<comment type="pathway">
    <text evidence="1">Pyrimidine metabolism; dUMP biosynthesis; dUMP from dCTP (dUTP route): step 1/2.</text>
</comment>
<comment type="subunit">
    <text evidence="1">Homotrimer.</text>
</comment>
<comment type="similarity">
    <text evidence="1">Belongs to the dCTP deaminase family.</text>
</comment>